<evidence type="ECO:0000255" key="1">
    <source>
        <dbReference type="HAMAP-Rule" id="MF_01395"/>
    </source>
</evidence>
<evidence type="ECO:0000255" key="2">
    <source>
        <dbReference type="PROSITE-ProRule" id="PRU01136"/>
    </source>
</evidence>
<keyword id="KW-0067">ATP-binding</keyword>
<keyword id="KW-0963">Cytoplasm</keyword>
<keyword id="KW-0275">Fatty acid biosynthesis</keyword>
<keyword id="KW-0276">Fatty acid metabolism</keyword>
<keyword id="KW-0444">Lipid biosynthesis</keyword>
<keyword id="KW-0443">Lipid metabolism</keyword>
<keyword id="KW-0479">Metal-binding</keyword>
<keyword id="KW-0547">Nucleotide-binding</keyword>
<keyword id="KW-0808">Transferase</keyword>
<keyword id="KW-0862">Zinc</keyword>
<keyword id="KW-0863">Zinc-finger</keyword>
<name>ACCD_VIBVU</name>
<sequence>MSWLEKILEKSNIVSSRKASIPEGVWTKCTSCEQVLYHAELERNLEVCPKCNHHMRMKARRRLETFLDEGNRVELGGELEPQDKLKFKDSKRYKERIAAAQKSSGEKDALVAMKGELLGMPIVACAFEFSFMGGSMGSVVGARFVRAVEAAMENNCALVCFSASGGARMQEALMSLMQMAKTSAALERLSAKGLPFISVMTDPTMGGVSASLAMLGDINIGEPKALIGFAGRRVIEQTVREDLPEGFQRSEFLLEHGAIDMIVDRREMRQRVGGLIAKLTNHKSPLVVSVNDSPNEAAYSVPEANEKG</sequence>
<protein>
    <recommendedName>
        <fullName evidence="1">Acetyl-coenzyme A carboxylase carboxyl transferase subunit beta</fullName>
        <shortName evidence="1">ACCase subunit beta</shortName>
        <shortName evidence="1">Acetyl-CoA carboxylase carboxyltransferase subunit beta</shortName>
        <ecNumber evidence="1">2.1.3.15</ecNumber>
    </recommendedName>
</protein>
<reference key="1">
    <citation type="submission" date="2002-12" db="EMBL/GenBank/DDBJ databases">
        <title>Complete genome sequence of Vibrio vulnificus CMCP6.</title>
        <authorList>
            <person name="Rhee J.H."/>
            <person name="Kim S.Y."/>
            <person name="Chung S.S."/>
            <person name="Kim J.J."/>
            <person name="Moon Y.H."/>
            <person name="Jeong H."/>
            <person name="Choy H.E."/>
        </authorList>
    </citation>
    <scope>NUCLEOTIDE SEQUENCE [LARGE SCALE GENOMIC DNA]</scope>
    <source>
        <strain>CMCP6</strain>
    </source>
</reference>
<reference key="2">
    <citation type="journal article" date="2011" name="Mol. Syst. Biol.">
        <title>Integrative genome-scale metabolic analysis of Vibrio vulnificus for drug targeting and discovery.</title>
        <authorList>
            <person name="Kim H.U."/>
            <person name="Kim S.Y."/>
            <person name="Jeong H."/>
            <person name="Kim T.Y."/>
            <person name="Kim J.J."/>
            <person name="Choy H.E."/>
            <person name="Yi K.Y."/>
            <person name="Rhee J.H."/>
            <person name="Lee S.Y."/>
        </authorList>
    </citation>
    <scope>SEQUENCE REVISION TO C-TERMINUS</scope>
    <source>
        <strain>CMCP6</strain>
    </source>
</reference>
<organism>
    <name type="scientific">Vibrio vulnificus (strain CMCP6)</name>
    <dbReference type="NCBI Taxonomy" id="216895"/>
    <lineage>
        <taxon>Bacteria</taxon>
        <taxon>Pseudomonadati</taxon>
        <taxon>Pseudomonadota</taxon>
        <taxon>Gammaproteobacteria</taxon>
        <taxon>Vibrionales</taxon>
        <taxon>Vibrionaceae</taxon>
        <taxon>Vibrio</taxon>
    </lineage>
</organism>
<proteinExistence type="inferred from homology"/>
<gene>
    <name evidence="1" type="primary">accD</name>
    <name type="ordered locus">VV1_1993</name>
</gene>
<comment type="function">
    <text evidence="1">Component of the acetyl coenzyme A carboxylase (ACC) complex. Biotin carboxylase (BC) catalyzes the carboxylation of biotin on its carrier protein (BCCP) and then the CO(2) group is transferred by the transcarboxylase to acetyl-CoA to form malonyl-CoA.</text>
</comment>
<comment type="catalytic activity">
    <reaction evidence="1">
        <text>N(6)-carboxybiotinyl-L-lysyl-[protein] + acetyl-CoA = N(6)-biotinyl-L-lysyl-[protein] + malonyl-CoA</text>
        <dbReference type="Rhea" id="RHEA:54728"/>
        <dbReference type="Rhea" id="RHEA-COMP:10505"/>
        <dbReference type="Rhea" id="RHEA-COMP:10506"/>
        <dbReference type="ChEBI" id="CHEBI:57288"/>
        <dbReference type="ChEBI" id="CHEBI:57384"/>
        <dbReference type="ChEBI" id="CHEBI:83144"/>
        <dbReference type="ChEBI" id="CHEBI:83145"/>
        <dbReference type="EC" id="2.1.3.15"/>
    </reaction>
</comment>
<comment type="cofactor">
    <cofactor evidence="1">
        <name>Zn(2+)</name>
        <dbReference type="ChEBI" id="CHEBI:29105"/>
    </cofactor>
    <text evidence="1">Binds 1 zinc ion per subunit.</text>
</comment>
<comment type="pathway">
    <text evidence="1">Lipid metabolism; malonyl-CoA biosynthesis; malonyl-CoA from acetyl-CoA: step 1/1.</text>
</comment>
<comment type="subunit">
    <text evidence="1">Acetyl-CoA carboxylase is a heterohexamer composed of biotin carboxyl carrier protein (AccB), biotin carboxylase (AccC) and two subunits each of ACCase subunit alpha (AccA) and ACCase subunit beta (AccD).</text>
</comment>
<comment type="subcellular location">
    <subcellularLocation>
        <location evidence="1">Cytoplasm</location>
    </subcellularLocation>
</comment>
<comment type="similarity">
    <text evidence="1">Belongs to the AccD/PCCB family.</text>
</comment>
<accession>Q8DB33</accession>
<feature type="chain" id="PRO_0000359092" description="Acetyl-coenzyme A carboxylase carboxyl transferase subunit beta">
    <location>
        <begin position="1"/>
        <end position="308"/>
    </location>
</feature>
<feature type="domain" description="CoA carboxyltransferase N-terminal" evidence="2">
    <location>
        <begin position="25"/>
        <end position="294"/>
    </location>
</feature>
<feature type="zinc finger region" description="C4-type" evidence="1">
    <location>
        <begin position="29"/>
        <end position="51"/>
    </location>
</feature>
<feature type="binding site" evidence="1">
    <location>
        <position position="29"/>
    </location>
    <ligand>
        <name>Zn(2+)</name>
        <dbReference type="ChEBI" id="CHEBI:29105"/>
    </ligand>
</feature>
<feature type="binding site" evidence="1">
    <location>
        <position position="32"/>
    </location>
    <ligand>
        <name>Zn(2+)</name>
        <dbReference type="ChEBI" id="CHEBI:29105"/>
    </ligand>
</feature>
<feature type="binding site" evidence="1">
    <location>
        <position position="48"/>
    </location>
    <ligand>
        <name>Zn(2+)</name>
        <dbReference type="ChEBI" id="CHEBI:29105"/>
    </ligand>
</feature>
<feature type="binding site" evidence="1">
    <location>
        <position position="51"/>
    </location>
    <ligand>
        <name>Zn(2+)</name>
        <dbReference type="ChEBI" id="CHEBI:29105"/>
    </ligand>
</feature>
<dbReference type="EC" id="2.1.3.15" evidence="1"/>
<dbReference type="EMBL" id="AE016795">
    <property type="protein sequence ID" value="AAO10391.2"/>
    <property type="molecule type" value="Genomic_DNA"/>
</dbReference>
<dbReference type="RefSeq" id="WP_011079890.1">
    <property type="nucleotide sequence ID" value="NC_004459.3"/>
</dbReference>
<dbReference type="SMR" id="Q8DB33"/>
<dbReference type="GeneID" id="93896213"/>
<dbReference type="KEGG" id="vvu:VV1_1993"/>
<dbReference type="HOGENOM" id="CLU_015486_1_0_6"/>
<dbReference type="UniPathway" id="UPA00655">
    <property type="reaction ID" value="UER00711"/>
</dbReference>
<dbReference type="Proteomes" id="UP000002275">
    <property type="component" value="Chromosome 1"/>
</dbReference>
<dbReference type="GO" id="GO:0009329">
    <property type="term" value="C:acetate CoA-transferase complex"/>
    <property type="evidence" value="ECO:0007669"/>
    <property type="project" value="TreeGrafter"/>
</dbReference>
<dbReference type="GO" id="GO:0003989">
    <property type="term" value="F:acetyl-CoA carboxylase activity"/>
    <property type="evidence" value="ECO:0007669"/>
    <property type="project" value="InterPro"/>
</dbReference>
<dbReference type="GO" id="GO:0005524">
    <property type="term" value="F:ATP binding"/>
    <property type="evidence" value="ECO:0007669"/>
    <property type="project" value="UniProtKB-KW"/>
</dbReference>
<dbReference type="GO" id="GO:0016743">
    <property type="term" value="F:carboxyl- or carbamoyltransferase activity"/>
    <property type="evidence" value="ECO:0007669"/>
    <property type="project" value="UniProtKB-UniRule"/>
</dbReference>
<dbReference type="GO" id="GO:0008270">
    <property type="term" value="F:zinc ion binding"/>
    <property type="evidence" value="ECO:0007669"/>
    <property type="project" value="UniProtKB-UniRule"/>
</dbReference>
<dbReference type="GO" id="GO:0006633">
    <property type="term" value="P:fatty acid biosynthetic process"/>
    <property type="evidence" value="ECO:0007669"/>
    <property type="project" value="UniProtKB-KW"/>
</dbReference>
<dbReference type="GO" id="GO:2001295">
    <property type="term" value="P:malonyl-CoA biosynthetic process"/>
    <property type="evidence" value="ECO:0007669"/>
    <property type="project" value="UniProtKB-UniRule"/>
</dbReference>
<dbReference type="FunFam" id="3.90.226.10:FF:000013">
    <property type="entry name" value="Acetyl-coenzyme A carboxylase carboxyl transferase subunit beta"/>
    <property type="match status" value="1"/>
</dbReference>
<dbReference type="Gene3D" id="3.90.226.10">
    <property type="entry name" value="2-enoyl-CoA Hydratase, Chain A, domain 1"/>
    <property type="match status" value="1"/>
</dbReference>
<dbReference type="HAMAP" id="MF_01395">
    <property type="entry name" value="AcetylCoA_CT_beta"/>
    <property type="match status" value="1"/>
</dbReference>
<dbReference type="InterPro" id="IPR034733">
    <property type="entry name" value="AcCoA_carboxyl_beta"/>
</dbReference>
<dbReference type="InterPro" id="IPR000438">
    <property type="entry name" value="Acetyl_CoA_COase_Trfase_b_su"/>
</dbReference>
<dbReference type="InterPro" id="IPR029045">
    <property type="entry name" value="ClpP/crotonase-like_dom_sf"/>
</dbReference>
<dbReference type="InterPro" id="IPR011762">
    <property type="entry name" value="COA_CT_N"/>
</dbReference>
<dbReference type="InterPro" id="IPR041010">
    <property type="entry name" value="Znf-ACC"/>
</dbReference>
<dbReference type="NCBIfam" id="TIGR00515">
    <property type="entry name" value="accD"/>
    <property type="match status" value="1"/>
</dbReference>
<dbReference type="PANTHER" id="PTHR42995">
    <property type="entry name" value="ACETYL-COENZYME A CARBOXYLASE CARBOXYL TRANSFERASE SUBUNIT BETA, CHLOROPLASTIC"/>
    <property type="match status" value="1"/>
</dbReference>
<dbReference type="PANTHER" id="PTHR42995:SF5">
    <property type="entry name" value="ACETYL-COENZYME A CARBOXYLASE CARBOXYL TRANSFERASE SUBUNIT BETA, CHLOROPLASTIC"/>
    <property type="match status" value="1"/>
</dbReference>
<dbReference type="Pfam" id="PF01039">
    <property type="entry name" value="Carboxyl_trans"/>
    <property type="match status" value="1"/>
</dbReference>
<dbReference type="Pfam" id="PF17848">
    <property type="entry name" value="Zn_ribbon_ACC"/>
    <property type="match status" value="1"/>
</dbReference>
<dbReference type="PRINTS" id="PR01070">
    <property type="entry name" value="ACCCTRFRASEB"/>
</dbReference>
<dbReference type="SUPFAM" id="SSF52096">
    <property type="entry name" value="ClpP/crotonase"/>
    <property type="match status" value="1"/>
</dbReference>
<dbReference type="PROSITE" id="PS50980">
    <property type="entry name" value="COA_CT_NTER"/>
    <property type="match status" value="1"/>
</dbReference>